<keyword id="KW-0963">Cytoplasm</keyword>
<keyword id="KW-0597">Phosphoprotein</keyword>
<keyword id="KW-1185">Reference proteome</keyword>
<comment type="function">
    <text evidence="5">Functions in the late secretory pathway. Required for the generation of secretory vesicles as well as for actin polarization and polarized growth.</text>
</comment>
<comment type="subcellular location">
    <subcellularLocation>
        <location evidence="3">Cytoplasm</location>
    </subcellularLocation>
</comment>
<comment type="miscellaneous">
    <text evidence="4">Present with 7500 molecules/cell in log phase SD medium.</text>
</comment>
<comment type="similarity">
    <text evidence="6">Belongs to the AVL9 family.</text>
</comment>
<sequence>MDEHEEAVIFGICLVDFHHKRGPEIEYWYGLPEGTQSAELWPNLPFQALPDGSHSFEETFTYFTLLYDERRQRSPPNGATDLSDDSINDNTTLFAISCSRQIKSDELVTKDKDVTRSTVQKAIVVISRQPIFGQIKDKLSIVTNAFFLQHDFGDRKIIQSLYENLKSIYTPASLVRNAENRLYIGLCLRKILHDFKRNALVLLKAIMLEKKIIVYGNDVEALCNLQFGLISLIPDLMSNLQDSGSPQLFQDISKLNVVDSFKSSNRESVLRFLGFPLPIFEKGGLFSPYTPLQQMNDIRSERTLFFMIGSSNTLLAEQKEELCHIFVNTDNSTVDILDKTLNPVLQLSSHDKKWIESISGIVSDTWNENDDETPKNSQFEGSEDFIRWQFEDYLTGLLSSVKLSDYLDLHKENDQALKTIPEDMLNSNPVHLFNLNWVQSWKETQNFLIFNSRTDDRLFDLFPPKHIYNGADTLSLLQQRFLATFHNLKRSSSNSSSNKNGHQSEEDIKDQESIESKKSVSQISVNPGKNTDKPAANLWNSWKEYFNKPKNTANEDVTESTEDLKNRSKTSNAIQKAMMGLGLHYKPDAETDQQSEEVGNSEDNEDDDTDEDSEDDDDDGGDDDDSEDDDDDDDGEGDENGDDGEGDENGDDGEGDENGDKEDSQDFSNGFTDVTNINTDHDKENEQNFEGNAENFNEDETVADKDIEGGPESNKNSDSKTDIYENDRNVEDSSKTRNTVKKSNEEGGANDAAIGNCVQDEEKL</sequence>
<dbReference type="EMBL" id="X89514">
    <property type="protein sequence ID" value="CAA61692.1"/>
    <property type="molecule type" value="Genomic_DNA"/>
</dbReference>
<dbReference type="EMBL" id="U53878">
    <property type="protein sequence ID" value="AAB67559.1"/>
    <property type="molecule type" value="Genomic_DNA"/>
</dbReference>
<dbReference type="EMBL" id="Z73286">
    <property type="protein sequence ID" value="CAA97681.1"/>
    <property type="molecule type" value="Genomic_DNA"/>
</dbReference>
<dbReference type="EMBL" id="BK006945">
    <property type="protein sequence ID" value="DAA09428.1"/>
    <property type="molecule type" value="Genomic_DNA"/>
</dbReference>
<dbReference type="PIR" id="S64951">
    <property type="entry name" value="S64951"/>
</dbReference>
<dbReference type="RefSeq" id="NP_013215.1">
    <property type="nucleotide sequence ID" value="NM_001182001.1"/>
</dbReference>
<dbReference type="BioGRID" id="31386">
    <property type="interactions" value="266"/>
</dbReference>
<dbReference type="DIP" id="DIP-4819N"/>
<dbReference type="FunCoup" id="Q12500">
    <property type="interactions" value="299"/>
</dbReference>
<dbReference type="IntAct" id="Q12500">
    <property type="interactions" value="1"/>
</dbReference>
<dbReference type="STRING" id="4932.YLR114C"/>
<dbReference type="CarbonylDB" id="Q12500"/>
<dbReference type="iPTMnet" id="Q12500"/>
<dbReference type="PaxDb" id="4932-YLR114C"/>
<dbReference type="PeptideAtlas" id="Q12500"/>
<dbReference type="EnsemblFungi" id="YLR114C_mRNA">
    <property type="protein sequence ID" value="YLR114C"/>
    <property type="gene ID" value="YLR114C"/>
</dbReference>
<dbReference type="GeneID" id="850805"/>
<dbReference type="KEGG" id="sce:YLR114C"/>
<dbReference type="AGR" id="SGD:S000004104"/>
<dbReference type="SGD" id="S000004104">
    <property type="gene designation" value="AVL9"/>
</dbReference>
<dbReference type="VEuPathDB" id="FungiDB:YLR114C"/>
<dbReference type="eggNOG" id="KOG3823">
    <property type="taxonomic scope" value="Eukaryota"/>
</dbReference>
<dbReference type="GeneTree" id="ENSGT00390000010255"/>
<dbReference type="HOGENOM" id="CLU_009066_3_0_1"/>
<dbReference type="InParanoid" id="Q12500"/>
<dbReference type="OMA" id="IRTQFRV"/>
<dbReference type="OrthoDB" id="26278at2759"/>
<dbReference type="BioCyc" id="YEAST:G3O-32259-MONOMER"/>
<dbReference type="BioGRID-ORCS" id="850805">
    <property type="hits" value="0 hits in 10 CRISPR screens"/>
</dbReference>
<dbReference type="PRO" id="PR:Q12500"/>
<dbReference type="Proteomes" id="UP000002311">
    <property type="component" value="Chromosome XII"/>
</dbReference>
<dbReference type="RNAct" id="Q12500">
    <property type="molecule type" value="protein"/>
</dbReference>
<dbReference type="GO" id="GO:0005935">
    <property type="term" value="C:cellular bud neck"/>
    <property type="evidence" value="ECO:0007005"/>
    <property type="project" value="SGD"/>
</dbReference>
<dbReference type="GO" id="GO:0005934">
    <property type="term" value="C:cellular bud tip"/>
    <property type="evidence" value="ECO:0007005"/>
    <property type="project" value="SGD"/>
</dbReference>
<dbReference type="GO" id="GO:0005737">
    <property type="term" value="C:cytoplasm"/>
    <property type="evidence" value="ECO:0007005"/>
    <property type="project" value="SGD"/>
</dbReference>
<dbReference type="GO" id="GO:0006892">
    <property type="term" value="P:post-Golgi vesicle-mediated transport"/>
    <property type="evidence" value="ECO:0000315"/>
    <property type="project" value="SGD"/>
</dbReference>
<dbReference type="InterPro" id="IPR018307">
    <property type="entry name" value="ABL9/DENND6_dom"/>
</dbReference>
<dbReference type="InterPro" id="IPR051731">
    <property type="entry name" value="DENND11/AVL9_GEFs"/>
</dbReference>
<dbReference type="InterPro" id="IPR037516">
    <property type="entry name" value="Tripartite_DENN"/>
</dbReference>
<dbReference type="PANTHER" id="PTHR31017:SF1">
    <property type="entry name" value="LATE SECRETORY PATHWAY PROTEIN AVL9 HOMOLOG"/>
    <property type="match status" value="1"/>
</dbReference>
<dbReference type="PANTHER" id="PTHR31017">
    <property type="entry name" value="LATE SECRETORY PATHWAY PROTEIN AVL9-RELATED"/>
    <property type="match status" value="1"/>
</dbReference>
<dbReference type="Pfam" id="PF09794">
    <property type="entry name" value="Avl9"/>
    <property type="match status" value="1"/>
</dbReference>
<dbReference type="PROSITE" id="PS50211">
    <property type="entry name" value="DENN"/>
    <property type="match status" value="1"/>
</dbReference>
<organism>
    <name type="scientific">Saccharomyces cerevisiae (strain ATCC 204508 / S288c)</name>
    <name type="common">Baker's yeast</name>
    <dbReference type="NCBI Taxonomy" id="559292"/>
    <lineage>
        <taxon>Eukaryota</taxon>
        <taxon>Fungi</taxon>
        <taxon>Dikarya</taxon>
        <taxon>Ascomycota</taxon>
        <taxon>Saccharomycotina</taxon>
        <taxon>Saccharomycetes</taxon>
        <taxon>Saccharomycetales</taxon>
        <taxon>Saccharomycetaceae</taxon>
        <taxon>Saccharomyces</taxon>
    </lineage>
</organism>
<evidence type="ECO:0000255" key="1">
    <source>
        <dbReference type="PROSITE-ProRule" id="PRU00304"/>
    </source>
</evidence>
<evidence type="ECO:0000256" key="2">
    <source>
        <dbReference type="SAM" id="MobiDB-lite"/>
    </source>
</evidence>
<evidence type="ECO:0000269" key="3">
    <source>
    </source>
</evidence>
<evidence type="ECO:0000269" key="4">
    <source>
    </source>
</evidence>
<evidence type="ECO:0000269" key="5">
    <source>
    </source>
</evidence>
<evidence type="ECO:0000305" key="6"/>
<evidence type="ECO:0007744" key="7">
    <source>
    </source>
</evidence>
<evidence type="ECO:0007744" key="8">
    <source>
    </source>
</evidence>
<name>AVL9_YEAST</name>
<protein>
    <recommendedName>
        <fullName>Late secretory pathway protein AVL9</fullName>
    </recommendedName>
    <alternativeName>
        <fullName>APL2 VPS1 synthetic lethal protein 9</fullName>
    </alternativeName>
</protein>
<proteinExistence type="evidence at protein level"/>
<feature type="chain" id="PRO_0000247424" description="Late secretory pathway protein AVL9">
    <location>
        <begin position="1"/>
        <end position="764"/>
    </location>
</feature>
<feature type="domain" description="uDENN" evidence="1">
    <location>
        <begin position="10"/>
        <end position="173"/>
    </location>
</feature>
<feature type="domain" description="cDENN" evidence="1">
    <location>
        <begin position="195"/>
        <end position="360"/>
    </location>
</feature>
<feature type="domain" description="dDENN" evidence="1">
    <location>
        <begin position="362"/>
        <end position="464"/>
    </location>
</feature>
<feature type="region of interest" description="Disordered" evidence="2">
    <location>
        <begin position="490"/>
        <end position="535"/>
    </location>
</feature>
<feature type="region of interest" description="Disordered" evidence="2">
    <location>
        <begin position="550"/>
        <end position="572"/>
    </location>
</feature>
<feature type="region of interest" description="Disordered" evidence="2">
    <location>
        <begin position="587"/>
        <end position="764"/>
    </location>
</feature>
<feature type="compositionally biased region" description="Basic and acidic residues" evidence="2">
    <location>
        <begin position="502"/>
        <end position="518"/>
    </location>
</feature>
<feature type="compositionally biased region" description="Polar residues" evidence="2">
    <location>
        <begin position="519"/>
        <end position="529"/>
    </location>
</feature>
<feature type="compositionally biased region" description="Acidic residues" evidence="2">
    <location>
        <begin position="590"/>
        <end position="665"/>
    </location>
</feature>
<feature type="compositionally biased region" description="Polar residues" evidence="2">
    <location>
        <begin position="666"/>
        <end position="678"/>
    </location>
</feature>
<feature type="compositionally biased region" description="Basic and acidic residues" evidence="2">
    <location>
        <begin position="715"/>
        <end position="735"/>
    </location>
</feature>
<feature type="modified residue" description="Phosphoserine" evidence="8">
    <location>
        <position position="519"/>
    </location>
</feature>
<feature type="modified residue" description="Phosphoserine" evidence="7">
    <location>
        <position position="524"/>
    </location>
</feature>
<gene>
    <name type="primary">AVL9</name>
    <name type="ordered locus">YLR114C</name>
    <name type="ORF">L2941</name>
</gene>
<reference key="1">
    <citation type="journal article" date="1997" name="Yeast">
        <title>Sequence analysis of a 37.6 kbp cosmid clone from the right arm of Saccharomyces cerevisiae chromosome XII, carrying YAP3, HOG1, SNR6, tRNA-Arg3 and 23 new open reading frames, among which several homologies to proteins involved in cell division control and to mammalian growth factors and other animal proteins are found.</title>
        <authorList>
            <person name="Verhasselt P."/>
            <person name="Volckaert G."/>
        </authorList>
    </citation>
    <scope>NUCLEOTIDE SEQUENCE [GENOMIC DNA]</scope>
    <source>
        <strain>ATCC 90840 / EAY235 / FY23</strain>
    </source>
</reference>
<reference key="2">
    <citation type="journal article" date="1997" name="Nature">
        <title>The nucleotide sequence of Saccharomyces cerevisiae chromosome XII.</title>
        <authorList>
            <person name="Johnston M."/>
            <person name="Hillier L.W."/>
            <person name="Riles L."/>
            <person name="Albermann K."/>
            <person name="Andre B."/>
            <person name="Ansorge W."/>
            <person name="Benes V."/>
            <person name="Brueckner M."/>
            <person name="Delius H."/>
            <person name="Dubois E."/>
            <person name="Duesterhoeft A."/>
            <person name="Entian K.-D."/>
            <person name="Floeth M."/>
            <person name="Goffeau A."/>
            <person name="Hebling U."/>
            <person name="Heumann K."/>
            <person name="Heuss-Neitzel D."/>
            <person name="Hilbert H."/>
            <person name="Hilger F."/>
            <person name="Kleine K."/>
            <person name="Koetter P."/>
            <person name="Louis E.J."/>
            <person name="Messenguy F."/>
            <person name="Mewes H.-W."/>
            <person name="Miosga T."/>
            <person name="Moestl D."/>
            <person name="Mueller-Auer S."/>
            <person name="Nentwich U."/>
            <person name="Obermaier B."/>
            <person name="Piravandi E."/>
            <person name="Pohl T.M."/>
            <person name="Portetelle D."/>
            <person name="Purnelle B."/>
            <person name="Rechmann S."/>
            <person name="Rieger M."/>
            <person name="Rinke M."/>
            <person name="Rose M."/>
            <person name="Scharfe M."/>
            <person name="Scherens B."/>
            <person name="Scholler P."/>
            <person name="Schwager C."/>
            <person name="Schwarz S."/>
            <person name="Underwood A.P."/>
            <person name="Urrestarazu L.A."/>
            <person name="Vandenbol M."/>
            <person name="Verhasselt P."/>
            <person name="Vierendeels F."/>
            <person name="Voet M."/>
            <person name="Volckaert G."/>
            <person name="Voss H."/>
            <person name="Wambutt R."/>
            <person name="Wedler E."/>
            <person name="Wedler H."/>
            <person name="Zimmermann F.K."/>
            <person name="Zollner A."/>
            <person name="Hani J."/>
            <person name="Hoheisel J.D."/>
        </authorList>
    </citation>
    <scope>NUCLEOTIDE SEQUENCE [LARGE SCALE GENOMIC DNA]</scope>
    <source>
        <strain>ATCC 204508 / S288c</strain>
    </source>
</reference>
<reference key="3">
    <citation type="journal article" date="2014" name="G3 (Bethesda)">
        <title>The reference genome sequence of Saccharomyces cerevisiae: Then and now.</title>
        <authorList>
            <person name="Engel S.R."/>
            <person name="Dietrich F.S."/>
            <person name="Fisk D.G."/>
            <person name="Binkley G."/>
            <person name="Balakrishnan R."/>
            <person name="Costanzo M.C."/>
            <person name="Dwight S.S."/>
            <person name="Hitz B.C."/>
            <person name="Karra K."/>
            <person name="Nash R.S."/>
            <person name="Weng S."/>
            <person name="Wong E.D."/>
            <person name="Lloyd P."/>
            <person name="Skrzypek M.S."/>
            <person name="Miyasato S.R."/>
            <person name="Simison M."/>
            <person name="Cherry J.M."/>
        </authorList>
    </citation>
    <scope>GENOME REANNOTATION</scope>
    <source>
        <strain>ATCC 204508 / S288c</strain>
    </source>
</reference>
<reference key="4">
    <citation type="journal article" date="2003" name="Nature">
        <title>Global analysis of protein localization in budding yeast.</title>
        <authorList>
            <person name="Huh W.-K."/>
            <person name="Falvo J.V."/>
            <person name="Gerke L.C."/>
            <person name="Carroll A.S."/>
            <person name="Howson R.W."/>
            <person name="Weissman J.S."/>
            <person name="O'Shea E.K."/>
        </authorList>
    </citation>
    <scope>SUBCELLULAR LOCATION [LARGE SCALE ANALYSIS]</scope>
</reference>
<reference key="5">
    <citation type="journal article" date="2003" name="Nature">
        <title>Global analysis of protein expression in yeast.</title>
        <authorList>
            <person name="Ghaemmaghami S."/>
            <person name="Huh W.-K."/>
            <person name="Bower K."/>
            <person name="Howson R.W."/>
            <person name="Belle A."/>
            <person name="Dephoure N."/>
            <person name="O'Shea E.K."/>
            <person name="Weissman J.S."/>
        </authorList>
    </citation>
    <scope>LEVEL OF PROTEIN EXPRESSION [LARGE SCALE ANALYSIS]</scope>
</reference>
<reference key="6">
    <citation type="journal article" date="2007" name="Mol. Biol. Cell">
        <title>Avl9p, a member of a novel protein superfamily, functions in the late secretory pathway.</title>
        <authorList>
            <person name="Harsay E."/>
            <person name="Schekman R."/>
        </authorList>
    </citation>
    <scope>FUNCTION</scope>
</reference>
<reference key="7">
    <citation type="journal article" date="2008" name="Mol. Cell. Proteomics">
        <title>A multidimensional chromatography technology for in-depth phosphoproteome analysis.</title>
        <authorList>
            <person name="Albuquerque C.P."/>
            <person name="Smolka M.B."/>
            <person name="Payne S.H."/>
            <person name="Bafna V."/>
            <person name="Eng J."/>
            <person name="Zhou H."/>
        </authorList>
    </citation>
    <scope>PHOSPHORYLATION [LARGE SCALE ANALYSIS] AT SER-524</scope>
    <scope>IDENTIFICATION BY MASS SPECTROMETRY [LARGE SCALE ANALYSIS]</scope>
</reference>
<reference key="8">
    <citation type="journal article" date="2009" name="Science">
        <title>Global analysis of Cdk1 substrate phosphorylation sites provides insights into evolution.</title>
        <authorList>
            <person name="Holt L.J."/>
            <person name="Tuch B.B."/>
            <person name="Villen J."/>
            <person name="Johnson A.D."/>
            <person name="Gygi S.P."/>
            <person name="Morgan D.O."/>
        </authorList>
    </citation>
    <scope>PHOSPHORYLATION [LARGE SCALE ANALYSIS] AT SER-519</scope>
    <scope>IDENTIFICATION BY MASS SPECTROMETRY [LARGE SCALE ANALYSIS]</scope>
</reference>
<accession>Q12500</accession>
<accession>D6VYB2</accession>